<dbReference type="EMBL" id="CP001340">
    <property type="protein sequence ID" value="ACL97166.1"/>
    <property type="molecule type" value="Genomic_DNA"/>
</dbReference>
<dbReference type="RefSeq" id="WP_010921415.1">
    <property type="nucleotide sequence ID" value="NC_011916.1"/>
</dbReference>
<dbReference type="RefSeq" id="YP_002519074.1">
    <property type="nucleotide sequence ID" value="NC_011916.1"/>
</dbReference>
<dbReference type="SMR" id="B8H6A5"/>
<dbReference type="GeneID" id="7331895"/>
<dbReference type="KEGG" id="ccs:CCNA_03701"/>
<dbReference type="PATRIC" id="fig|565050.3.peg.3608"/>
<dbReference type="HOGENOM" id="CLU_105066_2_1_5"/>
<dbReference type="OrthoDB" id="9804203at2"/>
<dbReference type="PhylomeDB" id="B8H6A5"/>
<dbReference type="Proteomes" id="UP000001364">
    <property type="component" value="Chromosome"/>
</dbReference>
<dbReference type="GO" id="GO:0005694">
    <property type="term" value="C:chromosome"/>
    <property type="evidence" value="ECO:0007669"/>
    <property type="project" value="InterPro"/>
</dbReference>
<dbReference type="GO" id="GO:0005829">
    <property type="term" value="C:cytosol"/>
    <property type="evidence" value="ECO:0007669"/>
    <property type="project" value="TreeGrafter"/>
</dbReference>
<dbReference type="GO" id="GO:0003677">
    <property type="term" value="F:DNA binding"/>
    <property type="evidence" value="ECO:0007669"/>
    <property type="project" value="UniProtKB-UniRule"/>
</dbReference>
<dbReference type="GO" id="GO:0030527">
    <property type="term" value="F:structural constituent of chromatin"/>
    <property type="evidence" value="ECO:0007669"/>
    <property type="project" value="InterPro"/>
</dbReference>
<dbReference type="GO" id="GO:0006310">
    <property type="term" value="P:DNA recombination"/>
    <property type="evidence" value="ECO:0007669"/>
    <property type="project" value="UniProtKB-UniRule"/>
</dbReference>
<dbReference type="GO" id="GO:0006355">
    <property type="term" value="P:regulation of DNA-templated transcription"/>
    <property type="evidence" value="ECO:0007669"/>
    <property type="project" value="UniProtKB-UniRule"/>
</dbReference>
<dbReference type="GO" id="GO:0006417">
    <property type="term" value="P:regulation of translation"/>
    <property type="evidence" value="ECO:0007669"/>
    <property type="project" value="UniProtKB-UniRule"/>
</dbReference>
<dbReference type="CDD" id="cd13836">
    <property type="entry name" value="IHF_B"/>
    <property type="match status" value="1"/>
</dbReference>
<dbReference type="Gene3D" id="4.10.520.10">
    <property type="entry name" value="IHF-like DNA-binding proteins"/>
    <property type="match status" value="1"/>
</dbReference>
<dbReference type="HAMAP" id="MF_00381">
    <property type="entry name" value="IHF_beta"/>
    <property type="match status" value="1"/>
</dbReference>
<dbReference type="InterPro" id="IPR000119">
    <property type="entry name" value="Hist_DNA-bd"/>
</dbReference>
<dbReference type="InterPro" id="IPR020816">
    <property type="entry name" value="Histone-like_DNA-bd_CS"/>
</dbReference>
<dbReference type="InterPro" id="IPR010992">
    <property type="entry name" value="IHF-like_DNA-bd_dom_sf"/>
</dbReference>
<dbReference type="InterPro" id="IPR005685">
    <property type="entry name" value="IHF_beta"/>
</dbReference>
<dbReference type="NCBIfam" id="TIGR00988">
    <property type="entry name" value="hip"/>
    <property type="match status" value="1"/>
</dbReference>
<dbReference type="NCBIfam" id="NF001222">
    <property type="entry name" value="PRK00199.1"/>
    <property type="match status" value="1"/>
</dbReference>
<dbReference type="PANTHER" id="PTHR33175">
    <property type="entry name" value="DNA-BINDING PROTEIN HU"/>
    <property type="match status" value="1"/>
</dbReference>
<dbReference type="PANTHER" id="PTHR33175:SF5">
    <property type="entry name" value="INTEGRATION HOST FACTOR SUBUNIT BETA"/>
    <property type="match status" value="1"/>
</dbReference>
<dbReference type="Pfam" id="PF00216">
    <property type="entry name" value="Bac_DNA_binding"/>
    <property type="match status" value="1"/>
</dbReference>
<dbReference type="PRINTS" id="PR01727">
    <property type="entry name" value="DNABINDINGHU"/>
</dbReference>
<dbReference type="SMART" id="SM00411">
    <property type="entry name" value="BHL"/>
    <property type="match status" value="1"/>
</dbReference>
<dbReference type="SUPFAM" id="SSF47729">
    <property type="entry name" value="IHF-like DNA-binding proteins"/>
    <property type="match status" value="1"/>
</dbReference>
<dbReference type="PROSITE" id="PS00045">
    <property type="entry name" value="HISTONE_LIKE"/>
    <property type="match status" value="1"/>
</dbReference>
<proteinExistence type="inferred from homology"/>
<comment type="function">
    <text evidence="1">This protein is one of the two subunits of integration host factor, a specific DNA-binding protein that functions in genetic recombination as well as in transcriptional and translational control.</text>
</comment>
<comment type="subunit">
    <text evidence="1">Heterodimer of an alpha and a beta chain.</text>
</comment>
<comment type="similarity">
    <text evidence="1">Belongs to the bacterial histone-like protein family.</text>
</comment>
<organism>
    <name type="scientific">Caulobacter vibrioides (strain NA1000 / CB15N)</name>
    <name type="common">Caulobacter crescentus</name>
    <dbReference type="NCBI Taxonomy" id="565050"/>
    <lineage>
        <taxon>Bacteria</taxon>
        <taxon>Pseudomonadati</taxon>
        <taxon>Pseudomonadota</taxon>
        <taxon>Alphaproteobacteria</taxon>
        <taxon>Caulobacterales</taxon>
        <taxon>Caulobacteraceae</taxon>
        <taxon>Caulobacter</taxon>
    </lineage>
</organism>
<accession>B8H6A5</accession>
<keyword id="KW-0233">DNA recombination</keyword>
<keyword id="KW-0238">DNA-binding</keyword>
<keyword id="KW-1185">Reference proteome</keyword>
<keyword id="KW-0804">Transcription</keyword>
<keyword id="KW-0805">Transcription regulation</keyword>
<keyword id="KW-0810">Translation regulation</keyword>
<protein>
    <recommendedName>
        <fullName evidence="1">Integration host factor subunit beta</fullName>
        <shortName evidence="1">IHF-beta</shortName>
    </recommendedName>
</protein>
<reference key="1">
    <citation type="journal article" date="2010" name="J. Bacteriol.">
        <title>The genetic basis of laboratory adaptation in Caulobacter crescentus.</title>
        <authorList>
            <person name="Marks M.E."/>
            <person name="Castro-Rojas C.M."/>
            <person name="Teiling C."/>
            <person name="Du L."/>
            <person name="Kapatral V."/>
            <person name="Walunas T.L."/>
            <person name="Crosson S."/>
        </authorList>
    </citation>
    <scope>NUCLEOTIDE SEQUENCE [LARGE SCALE GENOMIC DNA]</scope>
    <source>
        <strain>NA1000 / CB15N</strain>
    </source>
</reference>
<feature type="chain" id="PRO_1000190439" description="Integration host factor subunit beta">
    <location>
        <begin position="1"/>
        <end position="96"/>
    </location>
</feature>
<gene>
    <name evidence="1" type="primary">ihfB</name>
    <name evidence="1" type="synonym">himD</name>
    <name type="ordered locus">CCNA_03701</name>
</gene>
<evidence type="ECO:0000255" key="1">
    <source>
        <dbReference type="HAMAP-Rule" id="MF_00381"/>
    </source>
</evidence>
<sequence length="96" mass="10603">MIKSELIARLANENPHLTQKDVERVVGVILERMIGALEDGGRVELRGFGALSVRSRPARTGRNPRTGEAVDVRAKHVPFFKSGKELRARLNADGDE</sequence>
<name>IHFB_CAUVN</name>